<proteinExistence type="inferred from homology"/>
<reference key="1">
    <citation type="journal article" date="2004" name="Nat. Biotechnol.">
        <title>The genome sequence of the capnophilic rumen bacterium Mannheimia succiniciproducens.</title>
        <authorList>
            <person name="Hong S.H."/>
            <person name="Kim J.S."/>
            <person name="Lee S.Y."/>
            <person name="In Y.H."/>
            <person name="Choi S.S."/>
            <person name="Rih J.-K."/>
            <person name="Kim C.H."/>
            <person name="Jeong H."/>
            <person name="Hur C.G."/>
            <person name="Kim J.J."/>
        </authorList>
    </citation>
    <scope>NUCLEOTIDE SEQUENCE [LARGE SCALE GENOMIC DNA]</scope>
    <source>
        <strain>KCTC 0769BP / MBEL55E</strain>
    </source>
</reference>
<protein>
    <recommendedName>
        <fullName evidence="1">HTH-type transcriptional repressor PurR</fullName>
    </recommendedName>
    <alternativeName>
        <fullName evidence="1">Pur regulon repressor</fullName>
    </alternativeName>
    <alternativeName>
        <fullName evidence="1">Purine nucleotide synthesis repressor</fullName>
    </alternativeName>
</protein>
<name>PURR_MANSM</name>
<feature type="chain" id="PRO_0000279662" description="HTH-type transcriptional repressor PurR">
    <location>
        <begin position="1"/>
        <end position="334"/>
    </location>
</feature>
<feature type="domain" description="HTH lacI-type" evidence="1">
    <location>
        <begin position="2"/>
        <end position="56"/>
    </location>
</feature>
<feature type="DNA-binding region" description="H-T-H motif" evidence="1">
    <location>
        <begin position="4"/>
        <end position="23"/>
    </location>
</feature>
<feature type="DNA-binding region" evidence="1">
    <location>
        <begin position="48"/>
        <end position="56"/>
    </location>
</feature>
<feature type="binding site" evidence="1">
    <location>
        <position position="73"/>
    </location>
    <ligand>
        <name>hypoxanthine</name>
        <dbReference type="ChEBI" id="CHEBI:17368"/>
    </ligand>
</feature>
<feature type="binding site" evidence="1">
    <location>
        <position position="189"/>
    </location>
    <ligand>
        <name>hypoxanthine</name>
        <dbReference type="ChEBI" id="CHEBI:17368"/>
    </ligand>
</feature>
<feature type="binding site" evidence="1">
    <location>
        <position position="191"/>
    </location>
    <ligand>
        <name>hypoxanthine</name>
        <dbReference type="ChEBI" id="CHEBI:17368"/>
    </ligand>
</feature>
<feature type="binding site" evidence="1">
    <location>
        <position position="220"/>
    </location>
    <ligand>
        <name>hypoxanthine</name>
        <dbReference type="ChEBI" id="CHEBI:17368"/>
    </ligand>
</feature>
<feature type="binding site" evidence="1">
    <location>
        <position position="274"/>
    </location>
    <ligand>
        <name>hypoxanthine</name>
        <dbReference type="ChEBI" id="CHEBI:17368"/>
    </ligand>
</feature>
<dbReference type="EMBL" id="AE016827">
    <property type="protein sequence ID" value="AAU37670.1"/>
    <property type="molecule type" value="Genomic_DNA"/>
</dbReference>
<dbReference type="RefSeq" id="WP_011200238.1">
    <property type="nucleotide sequence ID" value="NC_006300.1"/>
</dbReference>
<dbReference type="SMR" id="Q65TP0"/>
<dbReference type="STRING" id="221988.MS1063"/>
<dbReference type="KEGG" id="msu:MS1063"/>
<dbReference type="eggNOG" id="COG1609">
    <property type="taxonomic scope" value="Bacteria"/>
</dbReference>
<dbReference type="HOGENOM" id="CLU_037628_6_2_6"/>
<dbReference type="OrthoDB" id="9798934at2"/>
<dbReference type="UniPathway" id="UPA00488"/>
<dbReference type="Proteomes" id="UP000000607">
    <property type="component" value="Chromosome"/>
</dbReference>
<dbReference type="GO" id="GO:0003700">
    <property type="term" value="F:DNA-binding transcription factor activity"/>
    <property type="evidence" value="ECO:0007669"/>
    <property type="project" value="TreeGrafter"/>
</dbReference>
<dbReference type="GO" id="GO:0000976">
    <property type="term" value="F:transcription cis-regulatory region binding"/>
    <property type="evidence" value="ECO:0007669"/>
    <property type="project" value="TreeGrafter"/>
</dbReference>
<dbReference type="GO" id="GO:0045892">
    <property type="term" value="P:negative regulation of DNA-templated transcription"/>
    <property type="evidence" value="ECO:0007669"/>
    <property type="project" value="UniProtKB-UniRule"/>
</dbReference>
<dbReference type="GO" id="GO:0006164">
    <property type="term" value="P:purine nucleotide biosynthetic process"/>
    <property type="evidence" value="ECO:0007669"/>
    <property type="project" value="UniProtKB-UniPathway"/>
</dbReference>
<dbReference type="CDD" id="cd01392">
    <property type="entry name" value="HTH_LacI"/>
    <property type="match status" value="1"/>
</dbReference>
<dbReference type="CDD" id="cd06275">
    <property type="entry name" value="PBP1_PurR"/>
    <property type="match status" value="1"/>
</dbReference>
<dbReference type="FunFam" id="1.10.260.40:FF:000002">
    <property type="entry name" value="HTH-type transcriptional repressor PurR"/>
    <property type="match status" value="1"/>
</dbReference>
<dbReference type="Gene3D" id="3.40.50.2300">
    <property type="match status" value="2"/>
</dbReference>
<dbReference type="Gene3D" id="1.10.260.40">
    <property type="entry name" value="lambda repressor-like DNA-binding domains"/>
    <property type="match status" value="1"/>
</dbReference>
<dbReference type="HAMAP" id="MF_01277">
    <property type="entry name" value="HTH_type_PurR"/>
    <property type="match status" value="1"/>
</dbReference>
<dbReference type="InterPro" id="IPR000843">
    <property type="entry name" value="HTH_LacI"/>
</dbReference>
<dbReference type="InterPro" id="IPR046335">
    <property type="entry name" value="LacI/GalR-like_sensor"/>
</dbReference>
<dbReference type="InterPro" id="IPR010982">
    <property type="entry name" value="Lambda_DNA-bd_dom_sf"/>
</dbReference>
<dbReference type="InterPro" id="IPR028082">
    <property type="entry name" value="Peripla_BP_I"/>
</dbReference>
<dbReference type="InterPro" id="IPR023588">
    <property type="entry name" value="Tscrpt_reg_HTH_PurR"/>
</dbReference>
<dbReference type="NCBIfam" id="NF007979">
    <property type="entry name" value="PRK10703.1"/>
    <property type="match status" value="1"/>
</dbReference>
<dbReference type="PANTHER" id="PTHR30146:SF148">
    <property type="entry name" value="HTH-TYPE TRANSCRIPTIONAL REPRESSOR PURR-RELATED"/>
    <property type="match status" value="1"/>
</dbReference>
<dbReference type="PANTHER" id="PTHR30146">
    <property type="entry name" value="LACI-RELATED TRANSCRIPTIONAL REPRESSOR"/>
    <property type="match status" value="1"/>
</dbReference>
<dbReference type="Pfam" id="PF00356">
    <property type="entry name" value="LacI"/>
    <property type="match status" value="1"/>
</dbReference>
<dbReference type="Pfam" id="PF13377">
    <property type="entry name" value="Peripla_BP_3"/>
    <property type="match status" value="1"/>
</dbReference>
<dbReference type="PRINTS" id="PR00036">
    <property type="entry name" value="HTHLACI"/>
</dbReference>
<dbReference type="SMART" id="SM00354">
    <property type="entry name" value="HTH_LACI"/>
    <property type="match status" value="1"/>
</dbReference>
<dbReference type="SUPFAM" id="SSF47413">
    <property type="entry name" value="lambda repressor-like DNA-binding domains"/>
    <property type="match status" value="1"/>
</dbReference>
<dbReference type="SUPFAM" id="SSF53822">
    <property type="entry name" value="Periplasmic binding protein-like I"/>
    <property type="match status" value="1"/>
</dbReference>
<dbReference type="PROSITE" id="PS00356">
    <property type="entry name" value="HTH_LACI_1"/>
    <property type="match status" value="1"/>
</dbReference>
<dbReference type="PROSITE" id="PS50932">
    <property type="entry name" value="HTH_LACI_2"/>
    <property type="match status" value="1"/>
</dbReference>
<organism>
    <name type="scientific">Mannheimia succiniciproducens (strain KCTC 0769BP / MBEL55E)</name>
    <dbReference type="NCBI Taxonomy" id="221988"/>
    <lineage>
        <taxon>Bacteria</taxon>
        <taxon>Pseudomonadati</taxon>
        <taxon>Pseudomonadota</taxon>
        <taxon>Gammaproteobacteria</taxon>
        <taxon>Pasteurellales</taxon>
        <taxon>Pasteurellaceae</taxon>
        <taxon>Basfia</taxon>
    </lineage>
</organism>
<sequence>MATIKDVAKMAGVSTTTVSHVINKTRHVADETKQTVLDAIKALNYSPSAVARSLKVNTTKSIGMVVTTSETPYFAEIIHAVEEQCYRQGYSLFLCNTQNDPDKLKNHLEMLAKKRVDGVLVMCSEYKDDSRDLLKSFSYLPIVIMDWGPVNPDTDLILDNSFEGGYLAGKHLVDNGHKKIGYLSAELTKVTAKQRYQGFIKALSEANVEMKSEWLFEGSFEPEDGYECMNRLLALEDRPTAVFCCNDIMALGAISAITEKGYRVPDDFSVIGYDNVHSSRFFAPPLTTIHQSKARLGERALRLLFERIAHKDAKRETIEIHPELVIRKSVKKIA</sequence>
<keyword id="KW-0238">DNA-binding</keyword>
<keyword id="KW-0658">Purine biosynthesis</keyword>
<keyword id="KW-0678">Repressor</keyword>
<keyword id="KW-0804">Transcription</keyword>
<keyword id="KW-0805">Transcription regulation</keyword>
<comment type="function">
    <text evidence="1">Is the main repressor of the genes involved in the de novo synthesis of purine nucleotides, regulating purB, purC, purEK, purF, purHD, purL, purMN and guaBA expression. PurR is allosterically activated to bind its cognate DNA by binding the purine corepressors, hypoxanthine or guanine, thereby effecting transcription repression.</text>
</comment>
<comment type="pathway">
    <text>Purine metabolism; purine nucleotide biosynthesis [regulation].</text>
</comment>
<comment type="subunit">
    <text evidence="1">Homodimer.</text>
</comment>
<comment type="domain">
    <text evidence="1">Consists of two structural and functional domains: an N-terminal DNA-binding domain, approximately the first 60 residues, and a larger C-terminal domain, approximately 280 residues, which imparts the function of corepressor binding and oligomerization.</text>
</comment>
<gene>
    <name evidence="1" type="primary">purR</name>
    <name type="ordered locus">MS1063</name>
</gene>
<accession>Q65TP0</accession>
<evidence type="ECO:0000255" key="1">
    <source>
        <dbReference type="HAMAP-Rule" id="MF_01277"/>
    </source>
</evidence>